<comment type="subcellular location">
    <subcellularLocation>
        <location evidence="1">Cytoplasm</location>
    </subcellularLocation>
</comment>
<comment type="similarity">
    <text evidence="1">Belongs to the TACO1 family.</text>
</comment>
<sequence length="244" mass="26572">MAGHSKWANIKHAKARQDAKRGKVFTKLIREITVAARLGGEDIDSNPRLRAVVDKAFAANMPKDTITRAIKRGAGSGAGDNLVEVRYEGYGPSGVAVMVDCLTDNKNRTVAEVRHAFSKCDGNLGTEGSVAYLFKQRGLITFPPNSDEEKIMEIALEVGAEDVTTNDDGSIDVTTLPEDFEKIRNAMKAADLNPSHAEVTVLASTEVGLDKDSAEQMLRLTEMLEDLDDVQNVYSNADYPEEVL</sequence>
<reference key="1">
    <citation type="submission" date="2007-11" db="EMBL/GenBank/DDBJ databases">
        <title>Genome sequencing of phylogenetically and phenotypically diverse Coxiella burnetii isolates.</title>
        <authorList>
            <person name="Seshadri R."/>
            <person name="Samuel J.E."/>
        </authorList>
    </citation>
    <scope>NUCLEOTIDE SEQUENCE [LARGE SCALE GENOMIC DNA]</scope>
    <source>
        <strain>RSA 331 / Henzerling II</strain>
    </source>
</reference>
<feature type="chain" id="PRO_1000083152" description="Probable transcriptional regulatory protein COXBURSA331_A1752">
    <location>
        <begin position="1"/>
        <end position="244"/>
    </location>
</feature>
<proteinExistence type="inferred from homology"/>
<dbReference type="EMBL" id="CP000890">
    <property type="protein sequence ID" value="ABX78477.1"/>
    <property type="molecule type" value="Genomic_DNA"/>
</dbReference>
<dbReference type="SMR" id="A9N9A0"/>
<dbReference type="KEGG" id="cbs:COXBURSA331_A1752"/>
<dbReference type="HOGENOM" id="CLU_062974_2_2_6"/>
<dbReference type="GO" id="GO:0005829">
    <property type="term" value="C:cytosol"/>
    <property type="evidence" value="ECO:0007669"/>
    <property type="project" value="TreeGrafter"/>
</dbReference>
<dbReference type="GO" id="GO:0003677">
    <property type="term" value="F:DNA binding"/>
    <property type="evidence" value="ECO:0007669"/>
    <property type="project" value="UniProtKB-UniRule"/>
</dbReference>
<dbReference type="GO" id="GO:0006355">
    <property type="term" value="P:regulation of DNA-templated transcription"/>
    <property type="evidence" value="ECO:0007669"/>
    <property type="project" value="UniProtKB-UniRule"/>
</dbReference>
<dbReference type="FunFam" id="1.10.10.200:FF:000001">
    <property type="entry name" value="Probable transcriptional regulatory protein YebC"/>
    <property type="match status" value="1"/>
</dbReference>
<dbReference type="FunFam" id="3.30.70.980:FF:000002">
    <property type="entry name" value="Probable transcriptional regulatory protein YebC"/>
    <property type="match status" value="1"/>
</dbReference>
<dbReference type="Gene3D" id="1.10.10.200">
    <property type="match status" value="1"/>
</dbReference>
<dbReference type="Gene3D" id="3.30.70.980">
    <property type="match status" value="2"/>
</dbReference>
<dbReference type="HAMAP" id="MF_00693">
    <property type="entry name" value="Transcrip_reg_TACO1"/>
    <property type="match status" value="1"/>
</dbReference>
<dbReference type="InterPro" id="IPR017856">
    <property type="entry name" value="Integrase-like_N"/>
</dbReference>
<dbReference type="InterPro" id="IPR048300">
    <property type="entry name" value="TACO1_YebC-like_2nd/3rd_dom"/>
</dbReference>
<dbReference type="InterPro" id="IPR049083">
    <property type="entry name" value="TACO1_YebC_N"/>
</dbReference>
<dbReference type="InterPro" id="IPR002876">
    <property type="entry name" value="Transcrip_reg_TACO1-like"/>
</dbReference>
<dbReference type="InterPro" id="IPR026564">
    <property type="entry name" value="Transcrip_reg_TACO1-like_dom3"/>
</dbReference>
<dbReference type="InterPro" id="IPR029072">
    <property type="entry name" value="YebC-like"/>
</dbReference>
<dbReference type="NCBIfam" id="NF001030">
    <property type="entry name" value="PRK00110.1"/>
    <property type="match status" value="1"/>
</dbReference>
<dbReference type="NCBIfam" id="NF009044">
    <property type="entry name" value="PRK12378.1"/>
    <property type="match status" value="1"/>
</dbReference>
<dbReference type="NCBIfam" id="TIGR01033">
    <property type="entry name" value="YebC/PmpR family DNA-binding transcriptional regulator"/>
    <property type="match status" value="1"/>
</dbReference>
<dbReference type="PANTHER" id="PTHR12532:SF6">
    <property type="entry name" value="TRANSCRIPTIONAL REGULATORY PROTEIN YEBC-RELATED"/>
    <property type="match status" value="1"/>
</dbReference>
<dbReference type="PANTHER" id="PTHR12532">
    <property type="entry name" value="TRANSLATIONAL ACTIVATOR OF CYTOCHROME C OXIDASE 1"/>
    <property type="match status" value="1"/>
</dbReference>
<dbReference type="Pfam" id="PF20772">
    <property type="entry name" value="TACO1_YebC_N"/>
    <property type="match status" value="1"/>
</dbReference>
<dbReference type="Pfam" id="PF01709">
    <property type="entry name" value="Transcrip_reg"/>
    <property type="match status" value="1"/>
</dbReference>
<dbReference type="SUPFAM" id="SSF75625">
    <property type="entry name" value="YebC-like"/>
    <property type="match status" value="1"/>
</dbReference>
<protein>
    <recommendedName>
        <fullName evidence="1">Probable transcriptional regulatory protein COXBURSA331_A1752</fullName>
    </recommendedName>
</protein>
<gene>
    <name type="ordered locus">COXBURSA331_A1752</name>
</gene>
<keyword id="KW-0963">Cytoplasm</keyword>
<keyword id="KW-0238">DNA-binding</keyword>
<keyword id="KW-0804">Transcription</keyword>
<keyword id="KW-0805">Transcription regulation</keyword>
<accession>A9N9A0</accession>
<evidence type="ECO:0000255" key="1">
    <source>
        <dbReference type="HAMAP-Rule" id="MF_00693"/>
    </source>
</evidence>
<organism>
    <name type="scientific">Coxiella burnetii (strain RSA 331 / Henzerling II)</name>
    <dbReference type="NCBI Taxonomy" id="360115"/>
    <lineage>
        <taxon>Bacteria</taxon>
        <taxon>Pseudomonadati</taxon>
        <taxon>Pseudomonadota</taxon>
        <taxon>Gammaproteobacteria</taxon>
        <taxon>Legionellales</taxon>
        <taxon>Coxiellaceae</taxon>
        <taxon>Coxiella</taxon>
    </lineage>
</organism>
<name>Y1752_COXBR</name>